<evidence type="ECO:0000255" key="1">
    <source>
        <dbReference type="HAMAP-Rule" id="MF_01333"/>
    </source>
</evidence>
<evidence type="ECO:0000305" key="2"/>
<comment type="function">
    <text evidence="1">This is one of the proteins that bind and probably mediate the attachment of the 5S RNA into the large ribosomal subunit, where it forms part of the central protuberance. In the 70S ribosome it contacts protein S13 of the 30S subunit (bridge B1b), connecting the 2 subunits; this bridge is implicated in subunit movement. Contacts the P site tRNA; the 5S rRNA and some of its associated proteins might help stabilize positioning of ribosome-bound tRNAs.</text>
</comment>
<comment type="subunit">
    <text evidence="1">Part of the 50S ribosomal subunit; part of the 5S rRNA/L5/L18/L25 subcomplex. Contacts the 5S rRNA and the P site tRNA. Forms a bridge to the 30S subunit in the 70S ribosome.</text>
</comment>
<comment type="similarity">
    <text evidence="1">Belongs to the universal ribosomal protein uL5 family.</text>
</comment>
<sequence>MADLKQVYHDKVVPELQAKFGYSNVMQVPRLQKIVVNMGVGEAIADKNFLNNAIGNLEAITGQKAQTTYAKKSIAGFKLREGQAVGCRVTLRRRQMWEFLDRLINAALPRVRDFRGVSEKAFDGRGNYTMGIKEQIIFPEIDYDKVDKVRGMDICIVTSAKTDDEARQLLAGFNMPFRKKEGNNG</sequence>
<protein>
    <recommendedName>
        <fullName evidence="1">Large ribosomal subunit protein uL5</fullName>
    </recommendedName>
    <alternativeName>
        <fullName evidence="2">50S ribosomal protein L5</fullName>
    </alternativeName>
</protein>
<accession>A0L5Y5</accession>
<organism>
    <name type="scientific">Magnetococcus marinus (strain ATCC BAA-1437 / JCM 17883 / MC-1)</name>
    <dbReference type="NCBI Taxonomy" id="156889"/>
    <lineage>
        <taxon>Bacteria</taxon>
        <taxon>Pseudomonadati</taxon>
        <taxon>Pseudomonadota</taxon>
        <taxon>Alphaproteobacteria</taxon>
        <taxon>Magnetococcales</taxon>
        <taxon>Magnetococcaceae</taxon>
        <taxon>Magnetococcus</taxon>
    </lineage>
</organism>
<name>RL5_MAGMM</name>
<proteinExistence type="inferred from homology"/>
<gene>
    <name evidence="1" type="primary">rplE</name>
    <name type="ordered locus">Mmc1_0859</name>
</gene>
<keyword id="KW-1185">Reference proteome</keyword>
<keyword id="KW-0687">Ribonucleoprotein</keyword>
<keyword id="KW-0689">Ribosomal protein</keyword>
<keyword id="KW-0694">RNA-binding</keyword>
<keyword id="KW-0699">rRNA-binding</keyword>
<keyword id="KW-0820">tRNA-binding</keyword>
<feature type="chain" id="PRO_1000086596" description="Large ribosomal subunit protein uL5">
    <location>
        <begin position="1"/>
        <end position="185"/>
    </location>
</feature>
<reference key="1">
    <citation type="journal article" date="2009" name="Appl. Environ. Microbiol.">
        <title>Complete genome sequence of the chemolithoautotrophic marine magnetotactic coccus strain MC-1.</title>
        <authorList>
            <person name="Schubbe S."/>
            <person name="Williams T.J."/>
            <person name="Xie G."/>
            <person name="Kiss H.E."/>
            <person name="Brettin T.S."/>
            <person name="Martinez D."/>
            <person name="Ross C.A."/>
            <person name="Schuler D."/>
            <person name="Cox B.L."/>
            <person name="Nealson K.H."/>
            <person name="Bazylinski D.A."/>
        </authorList>
    </citation>
    <scope>NUCLEOTIDE SEQUENCE [LARGE SCALE GENOMIC DNA]</scope>
    <source>
        <strain>ATCC BAA-1437 / JCM 17883 / MC-1</strain>
    </source>
</reference>
<dbReference type="EMBL" id="CP000471">
    <property type="protein sequence ID" value="ABK43378.1"/>
    <property type="molecule type" value="Genomic_DNA"/>
</dbReference>
<dbReference type="RefSeq" id="WP_011712537.1">
    <property type="nucleotide sequence ID" value="NC_008576.1"/>
</dbReference>
<dbReference type="SMR" id="A0L5Y5"/>
<dbReference type="STRING" id="156889.Mmc1_0859"/>
<dbReference type="KEGG" id="mgm:Mmc1_0859"/>
<dbReference type="eggNOG" id="COG0094">
    <property type="taxonomic scope" value="Bacteria"/>
</dbReference>
<dbReference type="HOGENOM" id="CLU_061015_2_1_5"/>
<dbReference type="OrthoDB" id="9806626at2"/>
<dbReference type="Proteomes" id="UP000002586">
    <property type="component" value="Chromosome"/>
</dbReference>
<dbReference type="GO" id="GO:1990904">
    <property type="term" value="C:ribonucleoprotein complex"/>
    <property type="evidence" value="ECO:0007669"/>
    <property type="project" value="UniProtKB-KW"/>
</dbReference>
<dbReference type="GO" id="GO:0005840">
    <property type="term" value="C:ribosome"/>
    <property type="evidence" value="ECO:0007669"/>
    <property type="project" value="UniProtKB-KW"/>
</dbReference>
<dbReference type="GO" id="GO:0019843">
    <property type="term" value="F:rRNA binding"/>
    <property type="evidence" value="ECO:0007669"/>
    <property type="project" value="UniProtKB-UniRule"/>
</dbReference>
<dbReference type="GO" id="GO:0003735">
    <property type="term" value="F:structural constituent of ribosome"/>
    <property type="evidence" value="ECO:0007669"/>
    <property type="project" value="InterPro"/>
</dbReference>
<dbReference type="GO" id="GO:0000049">
    <property type="term" value="F:tRNA binding"/>
    <property type="evidence" value="ECO:0007669"/>
    <property type="project" value="UniProtKB-UniRule"/>
</dbReference>
<dbReference type="GO" id="GO:0006412">
    <property type="term" value="P:translation"/>
    <property type="evidence" value="ECO:0007669"/>
    <property type="project" value="UniProtKB-UniRule"/>
</dbReference>
<dbReference type="FunFam" id="3.30.1440.10:FF:000001">
    <property type="entry name" value="50S ribosomal protein L5"/>
    <property type="match status" value="1"/>
</dbReference>
<dbReference type="Gene3D" id="3.30.1440.10">
    <property type="match status" value="1"/>
</dbReference>
<dbReference type="HAMAP" id="MF_01333_B">
    <property type="entry name" value="Ribosomal_uL5_B"/>
    <property type="match status" value="1"/>
</dbReference>
<dbReference type="InterPro" id="IPR002132">
    <property type="entry name" value="Ribosomal_uL5"/>
</dbReference>
<dbReference type="InterPro" id="IPR020930">
    <property type="entry name" value="Ribosomal_uL5_bac-type"/>
</dbReference>
<dbReference type="InterPro" id="IPR031309">
    <property type="entry name" value="Ribosomal_uL5_C"/>
</dbReference>
<dbReference type="InterPro" id="IPR022803">
    <property type="entry name" value="Ribosomal_uL5_dom_sf"/>
</dbReference>
<dbReference type="InterPro" id="IPR031310">
    <property type="entry name" value="Ribosomal_uL5_N"/>
</dbReference>
<dbReference type="NCBIfam" id="NF000585">
    <property type="entry name" value="PRK00010.1"/>
    <property type="match status" value="1"/>
</dbReference>
<dbReference type="PANTHER" id="PTHR11994">
    <property type="entry name" value="60S RIBOSOMAL PROTEIN L11-RELATED"/>
    <property type="match status" value="1"/>
</dbReference>
<dbReference type="Pfam" id="PF00281">
    <property type="entry name" value="Ribosomal_L5"/>
    <property type="match status" value="1"/>
</dbReference>
<dbReference type="Pfam" id="PF00673">
    <property type="entry name" value="Ribosomal_L5_C"/>
    <property type="match status" value="1"/>
</dbReference>
<dbReference type="PIRSF" id="PIRSF002161">
    <property type="entry name" value="Ribosomal_L5"/>
    <property type="match status" value="1"/>
</dbReference>
<dbReference type="SUPFAM" id="SSF55282">
    <property type="entry name" value="RL5-like"/>
    <property type="match status" value="1"/>
</dbReference>